<dbReference type="EMBL" id="CP001048">
    <property type="protein sequence ID" value="ACC89097.1"/>
    <property type="molecule type" value="Genomic_DNA"/>
</dbReference>
<dbReference type="RefSeq" id="WP_002211688.1">
    <property type="nucleotide sequence ID" value="NZ_CP009780.1"/>
</dbReference>
<dbReference type="SMR" id="B2K3Q1"/>
<dbReference type="GeneID" id="96665563"/>
<dbReference type="KEGG" id="ypb:YPTS_2134"/>
<dbReference type="PATRIC" id="fig|502801.10.peg.1524"/>
<dbReference type="GO" id="GO:0005737">
    <property type="term" value="C:cytoplasm"/>
    <property type="evidence" value="ECO:0007669"/>
    <property type="project" value="UniProtKB-SubCell"/>
</dbReference>
<dbReference type="GO" id="GO:0003677">
    <property type="term" value="F:DNA binding"/>
    <property type="evidence" value="ECO:0007669"/>
    <property type="project" value="UniProtKB-KW"/>
</dbReference>
<dbReference type="GO" id="GO:0003700">
    <property type="term" value="F:DNA-binding transcription factor activity"/>
    <property type="evidence" value="ECO:0007669"/>
    <property type="project" value="UniProtKB-UniRule"/>
</dbReference>
<dbReference type="GO" id="GO:0000062">
    <property type="term" value="F:fatty-acyl-CoA binding"/>
    <property type="evidence" value="ECO:0007669"/>
    <property type="project" value="InterPro"/>
</dbReference>
<dbReference type="GO" id="GO:0006631">
    <property type="term" value="P:fatty acid metabolic process"/>
    <property type="evidence" value="ECO:0007669"/>
    <property type="project" value="UniProtKB-KW"/>
</dbReference>
<dbReference type="GO" id="GO:0019217">
    <property type="term" value="P:regulation of fatty acid metabolic process"/>
    <property type="evidence" value="ECO:0007669"/>
    <property type="project" value="UniProtKB-UniRule"/>
</dbReference>
<dbReference type="CDD" id="cd07377">
    <property type="entry name" value="WHTH_GntR"/>
    <property type="match status" value="1"/>
</dbReference>
<dbReference type="FunFam" id="1.10.10.10:FF:000036">
    <property type="entry name" value="Fatty acid metabolism regulator protein"/>
    <property type="match status" value="1"/>
</dbReference>
<dbReference type="Gene3D" id="1.20.120.530">
    <property type="entry name" value="GntR ligand-binding domain-like"/>
    <property type="match status" value="1"/>
</dbReference>
<dbReference type="Gene3D" id="1.10.10.10">
    <property type="entry name" value="Winged helix-like DNA-binding domain superfamily/Winged helix DNA-binding domain"/>
    <property type="match status" value="1"/>
</dbReference>
<dbReference type="HAMAP" id="MF_00696">
    <property type="entry name" value="HTH_FadR"/>
    <property type="match status" value="1"/>
</dbReference>
<dbReference type="InterPro" id="IPR014178">
    <property type="entry name" value="FA-response_TF_FadR"/>
</dbReference>
<dbReference type="InterPro" id="IPR028374">
    <property type="entry name" value="FadR_C"/>
</dbReference>
<dbReference type="InterPro" id="IPR008920">
    <property type="entry name" value="TF_FadR/GntR_C"/>
</dbReference>
<dbReference type="InterPro" id="IPR000524">
    <property type="entry name" value="Tscrpt_reg_HTH_GntR"/>
</dbReference>
<dbReference type="InterPro" id="IPR036388">
    <property type="entry name" value="WH-like_DNA-bd_sf"/>
</dbReference>
<dbReference type="InterPro" id="IPR036390">
    <property type="entry name" value="WH_DNA-bd_sf"/>
</dbReference>
<dbReference type="NCBIfam" id="TIGR02812">
    <property type="entry name" value="fadR_gamma"/>
    <property type="match status" value="1"/>
</dbReference>
<dbReference type="NCBIfam" id="NF003444">
    <property type="entry name" value="PRK04984.1"/>
    <property type="match status" value="1"/>
</dbReference>
<dbReference type="PANTHER" id="PTHR43537:SF52">
    <property type="entry name" value="FATTY ACID METABOLISM REGULATOR PROTEIN"/>
    <property type="match status" value="1"/>
</dbReference>
<dbReference type="PANTHER" id="PTHR43537">
    <property type="entry name" value="TRANSCRIPTIONAL REGULATOR, GNTR FAMILY"/>
    <property type="match status" value="1"/>
</dbReference>
<dbReference type="Pfam" id="PF07840">
    <property type="entry name" value="FadR_C"/>
    <property type="match status" value="1"/>
</dbReference>
<dbReference type="Pfam" id="PF00392">
    <property type="entry name" value="GntR"/>
    <property type="match status" value="1"/>
</dbReference>
<dbReference type="PRINTS" id="PR00035">
    <property type="entry name" value="HTHGNTR"/>
</dbReference>
<dbReference type="SMART" id="SM00345">
    <property type="entry name" value="HTH_GNTR"/>
    <property type="match status" value="1"/>
</dbReference>
<dbReference type="SUPFAM" id="SSF48008">
    <property type="entry name" value="GntR ligand-binding domain-like"/>
    <property type="match status" value="1"/>
</dbReference>
<dbReference type="SUPFAM" id="SSF46785">
    <property type="entry name" value="Winged helix' DNA-binding domain"/>
    <property type="match status" value="1"/>
</dbReference>
<dbReference type="PROSITE" id="PS50949">
    <property type="entry name" value="HTH_GNTR"/>
    <property type="match status" value="1"/>
</dbReference>
<accession>B2K3Q1</accession>
<evidence type="ECO:0000255" key="1">
    <source>
        <dbReference type="HAMAP-Rule" id="MF_00696"/>
    </source>
</evidence>
<feature type="chain" id="PRO_1000132333" description="Fatty acid metabolism regulator protein">
    <location>
        <begin position="1"/>
        <end position="239"/>
    </location>
</feature>
<feature type="domain" description="HTH gntR-type" evidence="1">
    <location>
        <begin position="6"/>
        <end position="74"/>
    </location>
</feature>
<feature type="DNA-binding region" description="H-T-H motif" evidence="1">
    <location>
        <begin position="34"/>
        <end position="53"/>
    </location>
</feature>
<protein>
    <recommendedName>
        <fullName evidence="1">Fatty acid metabolism regulator protein</fullName>
    </recommendedName>
</protein>
<comment type="function">
    <text evidence="1">Multifunctional regulator of fatty acid metabolism.</text>
</comment>
<comment type="subunit">
    <text evidence="1">Homodimer.</text>
</comment>
<comment type="subcellular location">
    <subcellularLocation>
        <location evidence="1">Cytoplasm</location>
    </subcellularLocation>
</comment>
<proteinExistence type="inferred from homology"/>
<gene>
    <name evidence="1" type="primary">fadR</name>
    <name type="ordered locus">YPTS_2134</name>
</gene>
<reference key="1">
    <citation type="submission" date="2008-04" db="EMBL/GenBank/DDBJ databases">
        <title>Complete sequence of Yersinia pseudotuberculosis PB1/+.</title>
        <authorList>
            <person name="Copeland A."/>
            <person name="Lucas S."/>
            <person name="Lapidus A."/>
            <person name="Glavina del Rio T."/>
            <person name="Dalin E."/>
            <person name="Tice H."/>
            <person name="Bruce D."/>
            <person name="Goodwin L."/>
            <person name="Pitluck S."/>
            <person name="Munk A.C."/>
            <person name="Brettin T."/>
            <person name="Detter J.C."/>
            <person name="Han C."/>
            <person name="Tapia R."/>
            <person name="Schmutz J."/>
            <person name="Larimer F."/>
            <person name="Land M."/>
            <person name="Hauser L."/>
            <person name="Challacombe J.F."/>
            <person name="Green L."/>
            <person name="Lindler L.E."/>
            <person name="Nikolich M.P."/>
            <person name="Richardson P."/>
        </authorList>
    </citation>
    <scope>NUCLEOTIDE SEQUENCE [LARGE SCALE GENOMIC DNA]</scope>
    <source>
        <strain>PB1/+</strain>
    </source>
</reference>
<sequence>MVIKAQSPAGFAEEYIIESIWNNRFPPGSILPAERELSELIGVTRTTLREVLQRLARDGWLTIQHGKPTKVNNFWETSGLNILETLARLDHDSVPQLIDNLLAVRTNIATIFVRTAIRHHPEKAQEILARAKTVDDNAEAFTALDYGIFRGLAFASGNPIYGLILNGLKGLYTRVGRYYFSNPEARKLALTFYNKLSTLCDTESYDQVLECLRTYGKESGAIWHSMQGTMPSDLAEARR</sequence>
<organism>
    <name type="scientific">Yersinia pseudotuberculosis serotype IB (strain PB1/+)</name>
    <dbReference type="NCBI Taxonomy" id="502801"/>
    <lineage>
        <taxon>Bacteria</taxon>
        <taxon>Pseudomonadati</taxon>
        <taxon>Pseudomonadota</taxon>
        <taxon>Gammaproteobacteria</taxon>
        <taxon>Enterobacterales</taxon>
        <taxon>Yersiniaceae</taxon>
        <taxon>Yersinia</taxon>
    </lineage>
</organism>
<name>FADR_YERPB</name>
<keyword id="KW-0010">Activator</keyword>
<keyword id="KW-0963">Cytoplasm</keyword>
<keyword id="KW-0238">DNA-binding</keyword>
<keyword id="KW-0276">Fatty acid metabolism</keyword>
<keyword id="KW-0443">Lipid metabolism</keyword>
<keyword id="KW-0678">Repressor</keyword>
<keyword id="KW-0804">Transcription</keyword>
<keyword id="KW-0805">Transcription regulation</keyword>